<feature type="signal peptide" evidence="2">
    <location>
        <begin position="1"/>
        <end position="19"/>
    </location>
</feature>
<feature type="chain" id="PRO_0000342391" description="Serum amyloid P-component">
    <location>
        <begin position="20"/>
        <end position="224"/>
    </location>
</feature>
<feature type="domain" description="Pentraxin (PTX)" evidence="3">
    <location>
        <begin position="24"/>
        <end position="224"/>
    </location>
</feature>
<feature type="binding site" evidence="3">
    <location>
        <position position="77"/>
    </location>
    <ligand>
        <name>Ca(2+)</name>
        <dbReference type="ChEBI" id="CHEBI:29108"/>
        <label>1</label>
    </ligand>
</feature>
<feature type="binding site" evidence="3">
    <location>
        <position position="78"/>
    </location>
    <ligand>
        <name>Ca(2+)</name>
        <dbReference type="ChEBI" id="CHEBI:29108"/>
        <label>1</label>
    </ligand>
</feature>
<feature type="binding site" evidence="3">
    <location>
        <position position="155"/>
    </location>
    <ligand>
        <name>Ca(2+)</name>
        <dbReference type="ChEBI" id="CHEBI:29108"/>
        <label>1</label>
    </ligand>
</feature>
<feature type="binding site" evidence="3">
    <location>
        <position position="155"/>
    </location>
    <ligand>
        <name>Ca(2+)</name>
        <dbReference type="ChEBI" id="CHEBI:29108"/>
        <label>2</label>
    </ligand>
</feature>
<feature type="binding site" evidence="3">
    <location>
        <position position="156"/>
    </location>
    <ligand>
        <name>Ca(2+)</name>
        <dbReference type="ChEBI" id="CHEBI:29108"/>
        <label>1</label>
    </ligand>
</feature>
<feature type="binding site" evidence="3">
    <location>
        <position position="157"/>
    </location>
    <ligand>
        <name>Ca(2+)</name>
        <dbReference type="ChEBI" id="CHEBI:29108"/>
        <label>1</label>
    </ligand>
</feature>
<feature type="binding site" evidence="3">
    <location>
        <position position="157"/>
    </location>
    <ligand>
        <name>Ca(2+)</name>
        <dbReference type="ChEBI" id="CHEBI:29108"/>
        <label>2</label>
    </ligand>
</feature>
<feature type="binding site" evidence="3">
    <location>
        <position position="167"/>
    </location>
    <ligand>
        <name>Ca(2+)</name>
        <dbReference type="ChEBI" id="CHEBI:29108"/>
        <label>2</label>
    </ligand>
</feature>
<feature type="glycosylation site" description="N-linked (GlcNAc...) asparagine" evidence="2">
    <location>
        <position position="51"/>
    </location>
</feature>
<feature type="glycosylation site" description="N-linked (GlcNAc...) asparagine" evidence="2">
    <location>
        <position position="166"/>
    </location>
</feature>
<feature type="disulfide bond" evidence="3">
    <location>
        <begin position="55"/>
        <end position="114"/>
    </location>
</feature>
<sequence length="224" mass="25183">MNKLMSWVSVLIILPEAFAQTDLRGKVFVFPRESSTDHVTLITKLEKPLKNLTLCLRAYSDLSRGYSLFSYNIHSKDNELLVFKNGIGEYSLYIGKTKVTVRATEKFPSPVHICTSWESSTGIAEFWINGKPLVKRGLKQGYAVGAHPKIVLGQEQDSYGGGFDKNQSFMGEIGDLYMWDSVLSPEEILLVYQGSSSISPTILDWQALKYEIKGYVIVKPMVWG</sequence>
<evidence type="ECO:0000250" key="1"/>
<evidence type="ECO:0000255" key="2"/>
<evidence type="ECO:0000255" key="3">
    <source>
        <dbReference type="PROSITE-ProRule" id="PRU01172"/>
    </source>
</evidence>
<evidence type="ECO:0000305" key="4"/>
<keyword id="KW-0034">Amyloid</keyword>
<keyword id="KW-0106">Calcium</keyword>
<keyword id="KW-1015">Disulfide bond</keyword>
<keyword id="KW-0325">Glycoprotein</keyword>
<keyword id="KW-0430">Lectin</keyword>
<keyword id="KW-0479">Metal-binding</keyword>
<keyword id="KW-1185">Reference proteome</keyword>
<keyword id="KW-0964">Secreted</keyword>
<keyword id="KW-0732">Signal</keyword>
<accession>Q3T004</accession>
<dbReference type="EMBL" id="BC102623">
    <property type="protein sequence ID" value="AAI02624.1"/>
    <property type="molecule type" value="mRNA"/>
</dbReference>
<dbReference type="RefSeq" id="NP_001029638.1">
    <property type="nucleotide sequence ID" value="NM_001034466.2"/>
</dbReference>
<dbReference type="SMR" id="Q3T004"/>
<dbReference type="FunCoup" id="Q3T004">
    <property type="interactions" value="212"/>
</dbReference>
<dbReference type="STRING" id="9913.ENSBTAP00000026133"/>
<dbReference type="GlyCosmos" id="Q3T004">
    <property type="glycosylation" value="2 sites, No reported glycans"/>
</dbReference>
<dbReference type="GlyGen" id="Q3T004">
    <property type="glycosylation" value="2 sites"/>
</dbReference>
<dbReference type="PaxDb" id="9913-ENSBTAP00000026133"/>
<dbReference type="Ensembl" id="ENSBTAT00000026133.5">
    <property type="protein sequence ID" value="ENSBTAP00000026133.3"/>
    <property type="gene ID" value="ENSBTAG00000019616.5"/>
</dbReference>
<dbReference type="GeneID" id="514488"/>
<dbReference type="KEGG" id="bta:514488"/>
<dbReference type="CTD" id="325"/>
<dbReference type="VEuPathDB" id="HostDB:ENSBTAG00000019616"/>
<dbReference type="VGNC" id="VGNC:26009">
    <property type="gene designation" value="APCS"/>
</dbReference>
<dbReference type="eggNOG" id="ENOG502S201">
    <property type="taxonomic scope" value="Eukaryota"/>
</dbReference>
<dbReference type="GeneTree" id="ENSGT01100000263515"/>
<dbReference type="HOGENOM" id="CLU_032051_2_0_1"/>
<dbReference type="InParanoid" id="Q3T004"/>
<dbReference type="OMA" id="NPNILDW"/>
<dbReference type="OrthoDB" id="547680at2759"/>
<dbReference type="TreeFam" id="TF330208"/>
<dbReference type="Proteomes" id="UP000009136">
    <property type="component" value="Chromosome 3"/>
</dbReference>
<dbReference type="Bgee" id="ENSBTAG00000019616">
    <property type="expression patterns" value="Expressed in liver and 21 other cell types or tissues"/>
</dbReference>
<dbReference type="GO" id="GO:0005615">
    <property type="term" value="C:extracellular space"/>
    <property type="evidence" value="ECO:0000318"/>
    <property type="project" value="GO_Central"/>
</dbReference>
<dbReference type="GO" id="GO:0005509">
    <property type="term" value="F:calcium ion binding"/>
    <property type="evidence" value="ECO:0007669"/>
    <property type="project" value="Ensembl"/>
</dbReference>
<dbReference type="GO" id="GO:0030246">
    <property type="term" value="F:carbohydrate binding"/>
    <property type="evidence" value="ECO:0007669"/>
    <property type="project" value="UniProtKB-KW"/>
</dbReference>
<dbReference type="GO" id="GO:0001849">
    <property type="term" value="F:complement component C1q complex binding"/>
    <property type="evidence" value="ECO:0000318"/>
    <property type="project" value="GO_Central"/>
</dbReference>
<dbReference type="GO" id="GO:0042802">
    <property type="term" value="F:identical protein binding"/>
    <property type="evidence" value="ECO:0007669"/>
    <property type="project" value="Ensembl"/>
</dbReference>
<dbReference type="GO" id="GO:0046790">
    <property type="term" value="F:virion binding"/>
    <property type="evidence" value="ECO:0007669"/>
    <property type="project" value="Ensembl"/>
</dbReference>
<dbReference type="GO" id="GO:0046597">
    <property type="term" value="P:host-mediated suppression of symbiont invasion"/>
    <property type="evidence" value="ECO:0007669"/>
    <property type="project" value="Ensembl"/>
</dbReference>
<dbReference type="GO" id="GO:0045087">
    <property type="term" value="P:innate immune response"/>
    <property type="evidence" value="ECO:0000318"/>
    <property type="project" value="GO_Central"/>
</dbReference>
<dbReference type="GO" id="GO:0044871">
    <property type="term" value="P:negative regulation by host of viral glycoprotein metabolic process"/>
    <property type="evidence" value="ECO:0007669"/>
    <property type="project" value="Ensembl"/>
</dbReference>
<dbReference type="GO" id="GO:0045656">
    <property type="term" value="P:negative regulation of monocyte differentiation"/>
    <property type="evidence" value="ECO:0007669"/>
    <property type="project" value="Ensembl"/>
</dbReference>
<dbReference type="CDD" id="cd00152">
    <property type="entry name" value="PTX"/>
    <property type="match status" value="1"/>
</dbReference>
<dbReference type="FunFam" id="2.60.120.200:FF:000070">
    <property type="entry name" value="Serum amyloid P-component"/>
    <property type="match status" value="1"/>
</dbReference>
<dbReference type="Gene3D" id="2.60.120.200">
    <property type="match status" value="1"/>
</dbReference>
<dbReference type="InterPro" id="IPR013320">
    <property type="entry name" value="ConA-like_dom_sf"/>
</dbReference>
<dbReference type="InterPro" id="IPR030476">
    <property type="entry name" value="Pentaxin_CS"/>
</dbReference>
<dbReference type="InterPro" id="IPR001759">
    <property type="entry name" value="Pentraxin-related"/>
</dbReference>
<dbReference type="InterPro" id="IPR051005">
    <property type="entry name" value="Pentraxin_domain"/>
</dbReference>
<dbReference type="PANTHER" id="PTHR45869">
    <property type="entry name" value="C-REACTIVE PROTEIN-RELATED"/>
    <property type="match status" value="1"/>
</dbReference>
<dbReference type="PANTHER" id="PTHR45869:SF5">
    <property type="entry name" value="SERUM AMYLOID P-COMPONENT"/>
    <property type="match status" value="1"/>
</dbReference>
<dbReference type="Pfam" id="PF00354">
    <property type="entry name" value="Pentaxin"/>
    <property type="match status" value="1"/>
</dbReference>
<dbReference type="PRINTS" id="PR00895">
    <property type="entry name" value="PENTAXIN"/>
</dbReference>
<dbReference type="SMART" id="SM00159">
    <property type="entry name" value="PTX"/>
    <property type="match status" value="1"/>
</dbReference>
<dbReference type="SUPFAM" id="SSF49899">
    <property type="entry name" value="Concanavalin A-like lectins/glucanases"/>
    <property type="match status" value="1"/>
</dbReference>
<dbReference type="PROSITE" id="PS00289">
    <property type="entry name" value="PTX_1"/>
    <property type="match status" value="1"/>
</dbReference>
<dbReference type="PROSITE" id="PS51828">
    <property type="entry name" value="PTX_2"/>
    <property type="match status" value="1"/>
</dbReference>
<protein>
    <recommendedName>
        <fullName>Serum amyloid P-component</fullName>
        <shortName>SAP</shortName>
    </recommendedName>
</protein>
<reference key="1">
    <citation type="submission" date="2005-08" db="EMBL/GenBank/DDBJ databases">
        <authorList>
            <consortium name="NIH - Mammalian Gene Collection (MGC) project"/>
        </authorList>
    </citation>
    <scope>NUCLEOTIDE SEQUENCE [LARGE SCALE MRNA]</scope>
    <source>
        <strain>Hereford</strain>
        <tissue>Testis</tissue>
    </source>
</reference>
<gene>
    <name type="primary">APCS</name>
</gene>
<organism>
    <name type="scientific">Bos taurus</name>
    <name type="common">Bovine</name>
    <dbReference type="NCBI Taxonomy" id="9913"/>
    <lineage>
        <taxon>Eukaryota</taxon>
        <taxon>Metazoa</taxon>
        <taxon>Chordata</taxon>
        <taxon>Craniata</taxon>
        <taxon>Vertebrata</taxon>
        <taxon>Euteleostomi</taxon>
        <taxon>Mammalia</taxon>
        <taxon>Eutheria</taxon>
        <taxon>Laurasiatheria</taxon>
        <taxon>Artiodactyla</taxon>
        <taxon>Ruminantia</taxon>
        <taxon>Pecora</taxon>
        <taxon>Bovidae</taxon>
        <taxon>Bovinae</taxon>
        <taxon>Bos</taxon>
    </lineage>
</organism>
<proteinExistence type="evidence at transcript level"/>
<comment type="cofactor">
    <cofactor evidence="1">
        <name>Ca(2+)</name>
        <dbReference type="ChEBI" id="CHEBI:29108"/>
    </cofactor>
    <text evidence="1">Binds 2 calcium ions per subunit.</text>
</comment>
<comment type="subunit">
    <text>Homopentamer. Pentraxin (or pentaxin) have a discoid arrangement of 5 non-covalently bound subunits.</text>
</comment>
<comment type="subcellular location">
    <subcellularLocation>
        <location evidence="1">Secreted</location>
    </subcellularLocation>
</comment>
<comment type="similarity">
    <text evidence="4">Belongs to the pentraxin family.</text>
</comment>
<name>SAMP_BOVIN</name>